<evidence type="ECO:0000255" key="1">
    <source>
        <dbReference type="HAMAP-Rule" id="MF_00731"/>
    </source>
</evidence>
<proteinExistence type="inferred from homology"/>
<protein>
    <recommendedName>
        <fullName evidence="1">2-succinylbenzoate--CoA ligase</fullName>
        <ecNumber evidence="1">6.2.1.26</ecNumber>
    </recommendedName>
    <alternativeName>
        <fullName evidence="1">o-succinylbenzoyl-CoA synthetase</fullName>
        <shortName evidence="1">OSB-CoA synthetase</shortName>
    </alternativeName>
</protein>
<organism>
    <name type="scientific">Staphylococcus aureus (strain JH1)</name>
    <dbReference type="NCBI Taxonomy" id="359787"/>
    <lineage>
        <taxon>Bacteria</taxon>
        <taxon>Bacillati</taxon>
        <taxon>Bacillota</taxon>
        <taxon>Bacilli</taxon>
        <taxon>Bacillales</taxon>
        <taxon>Staphylococcaceae</taxon>
        <taxon>Staphylococcus</taxon>
    </lineage>
</organism>
<dbReference type="EC" id="6.2.1.26" evidence="1"/>
<dbReference type="EMBL" id="CP000736">
    <property type="protein sequence ID" value="ABR52725.1"/>
    <property type="molecule type" value="Genomic_DNA"/>
</dbReference>
<dbReference type="SMR" id="A6U2Q7"/>
<dbReference type="KEGG" id="sah:SaurJH1_1883"/>
<dbReference type="HOGENOM" id="CLU_000022_59_0_9"/>
<dbReference type="UniPathway" id="UPA00079"/>
<dbReference type="UniPathway" id="UPA01057">
    <property type="reaction ID" value="UER00166"/>
</dbReference>
<dbReference type="GO" id="GO:0005524">
    <property type="term" value="F:ATP binding"/>
    <property type="evidence" value="ECO:0007669"/>
    <property type="project" value="UniProtKB-KW"/>
</dbReference>
<dbReference type="GO" id="GO:0008756">
    <property type="term" value="F:o-succinylbenzoate-CoA ligase activity"/>
    <property type="evidence" value="ECO:0007669"/>
    <property type="project" value="UniProtKB-UniRule"/>
</dbReference>
<dbReference type="GO" id="GO:0009234">
    <property type="term" value="P:menaquinone biosynthetic process"/>
    <property type="evidence" value="ECO:0007669"/>
    <property type="project" value="UniProtKB-UniRule"/>
</dbReference>
<dbReference type="CDD" id="cd05912">
    <property type="entry name" value="OSB_CoA_lg"/>
    <property type="match status" value="1"/>
</dbReference>
<dbReference type="Gene3D" id="3.30.300.30">
    <property type="match status" value="1"/>
</dbReference>
<dbReference type="Gene3D" id="3.40.50.12780">
    <property type="entry name" value="N-terminal domain of ligase-like"/>
    <property type="match status" value="1"/>
</dbReference>
<dbReference type="HAMAP" id="MF_00731">
    <property type="entry name" value="MenE"/>
    <property type="match status" value="1"/>
</dbReference>
<dbReference type="InterPro" id="IPR025110">
    <property type="entry name" value="AMP-bd_C"/>
</dbReference>
<dbReference type="InterPro" id="IPR045851">
    <property type="entry name" value="AMP-bd_C_sf"/>
</dbReference>
<dbReference type="InterPro" id="IPR000873">
    <property type="entry name" value="AMP-dep_synth/lig_dom"/>
</dbReference>
<dbReference type="InterPro" id="IPR042099">
    <property type="entry name" value="ANL_N_sf"/>
</dbReference>
<dbReference type="InterPro" id="IPR050237">
    <property type="entry name" value="ATP-dep_AMP-bd_enzyme"/>
</dbReference>
<dbReference type="InterPro" id="IPR010192">
    <property type="entry name" value="MenE"/>
</dbReference>
<dbReference type="NCBIfam" id="TIGR01923">
    <property type="entry name" value="menE"/>
    <property type="match status" value="1"/>
</dbReference>
<dbReference type="PANTHER" id="PTHR43767">
    <property type="entry name" value="LONG-CHAIN-FATTY-ACID--COA LIGASE"/>
    <property type="match status" value="1"/>
</dbReference>
<dbReference type="PANTHER" id="PTHR43767:SF1">
    <property type="entry name" value="NONRIBOSOMAL PEPTIDE SYNTHASE PES1 (EUROFUNG)-RELATED"/>
    <property type="match status" value="1"/>
</dbReference>
<dbReference type="Pfam" id="PF00501">
    <property type="entry name" value="AMP-binding"/>
    <property type="match status" value="1"/>
</dbReference>
<dbReference type="Pfam" id="PF13193">
    <property type="entry name" value="AMP-binding_C"/>
    <property type="match status" value="1"/>
</dbReference>
<dbReference type="SUPFAM" id="SSF56801">
    <property type="entry name" value="Acetyl-CoA synthetase-like"/>
    <property type="match status" value="1"/>
</dbReference>
<sequence length="492" mass="55357">MDFWLYKQAQQNGHHIAITDGQESYTYQNLYCEASLLAKRLKAYQQSRVGLYIDNSIQSIILIHACWLANIEIAMINTRLTPNEMTNQMRSIDVQLIFCTLPLELRGFQIVSLDDIEFAGRDITTNGLLDNTMGIQYDTSNETVVPKESPSNILNTSFNLDDIASIMFTSGTTGPQKAVPQTFRNHYASAIGCKESLGFDRDTNWLSVLPIYHISGLSVLLRAVIEGFTVRIVDKFNAEQILTMIKNERITHISLVPQTLNWLMQQGLHEPYNLQKILLGGAKLSATMIETALQYNLPIYNSFGMTETCSQFLTATPEMLHARPDTVGMPSANVDVKIKNPNKEGHGELMIKGANVMNGYLYPTDLTGTFENGYFNTGDIAEIDHEGYVMIYDRRKDLIISGGENIYPYQIETVAKQFPGISDAVCVGHPDDTWGQVPKLYFVSESDISKAQLIAYLSKHLAKYKVPKHFEKVDTLPYTSTGKLQRNKLYRG</sequence>
<gene>
    <name evidence="1" type="primary">menE</name>
    <name type="ordered locus">SaurJH1_1883</name>
</gene>
<keyword id="KW-0067">ATP-binding</keyword>
<keyword id="KW-0436">Ligase</keyword>
<keyword id="KW-0474">Menaquinone biosynthesis</keyword>
<keyword id="KW-0547">Nucleotide-binding</keyword>
<accession>A6U2Q7</accession>
<comment type="function">
    <text evidence="1">Converts 2-succinylbenzoate (OSB) to 2-succinylbenzoyl-CoA (OSB-CoA).</text>
</comment>
<comment type="catalytic activity">
    <reaction evidence="1">
        <text>2-succinylbenzoate + ATP + CoA = 2-succinylbenzoyl-CoA + AMP + diphosphate</text>
        <dbReference type="Rhea" id="RHEA:17009"/>
        <dbReference type="ChEBI" id="CHEBI:18325"/>
        <dbReference type="ChEBI" id="CHEBI:30616"/>
        <dbReference type="ChEBI" id="CHEBI:33019"/>
        <dbReference type="ChEBI" id="CHEBI:57287"/>
        <dbReference type="ChEBI" id="CHEBI:57364"/>
        <dbReference type="ChEBI" id="CHEBI:456215"/>
        <dbReference type="EC" id="6.2.1.26"/>
    </reaction>
</comment>
<comment type="pathway">
    <text evidence="1">Quinol/quinone metabolism; 1,4-dihydroxy-2-naphthoate biosynthesis; 1,4-dihydroxy-2-naphthoate from chorismate: step 5/7.</text>
</comment>
<comment type="pathway">
    <text evidence="1">Quinol/quinone metabolism; menaquinone biosynthesis.</text>
</comment>
<comment type="similarity">
    <text evidence="1">Belongs to the ATP-dependent AMP-binding enzyme family. MenE subfamily.</text>
</comment>
<reference key="1">
    <citation type="submission" date="2007-06" db="EMBL/GenBank/DDBJ databases">
        <title>Complete sequence of chromosome of Staphylococcus aureus subsp. aureus JH1.</title>
        <authorList>
            <consortium name="US DOE Joint Genome Institute"/>
            <person name="Copeland A."/>
            <person name="Lucas S."/>
            <person name="Lapidus A."/>
            <person name="Barry K."/>
            <person name="Detter J.C."/>
            <person name="Glavina del Rio T."/>
            <person name="Hammon N."/>
            <person name="Israni S."/>
            <person name="Dalin E."/>
            <person name="Tice H."/>
            <person name="Pitluck S."/>
            <person name="Chain P."/>
            <person name="Malfatti S."/>
            <person name="Shin M."/>
            <person name="Vergez L."/>
            <person name="Schmutz J."/>
            <person name="Larimer F."/>
            <person name="Land M."/>
            <person name="Hauser L."/>
            <person name="Kyrpides N."/>
            <person name="Ivanova N."/>
            <person name="Tomasz A."/>
            <person name="Richardson P."/>
        </authorList>
    </citation>
    <scope>NUCLEOTIDE SEQUENCE [LARGE SCALE GENOMIC DNA]</scope>
    <source>
        <strain>JH1</strain>
    </source>
</reference>
<feature type="chain" id="PRO_1000083335" description="2-succinylbenzoate--CoA ligase">
    <location>
        <begin position="1"/>
        <end position="492"/>
    </location>
</feature>
<name>MENE_STAA2</name>